<accession>B0TM11</accession>
<feature type="chain" id="PRO_1000086536" description="Large ribosomal subunit protein uL4">
    <location>
        <begin position="1"/>
        <end position="201"/>
    </location>
</feature>
<feature type="region of interest" description="Disordered" evidence="2">
    <location>
        <begin position="45"/>
        <end position="71"/>
    </location>
</feature>
<sequence>MELVLKDAQSALEVSEATFGRDFNEALVHQVVVAYAANARQGTRAQKTRAEVTGSGKKPWRQKGTGRARAGTVKGPIWRGGGVTFAAKTQDHSQKVNKKMYRGALKSIFSELVRQDRLIVVESFGVDAPKTKELKAKLDAMQLQDVLIVTPEVDENLFLAARNLYKVDVRDVAGVDPVSLIAFDKVLVTAEAIKQIEEMLG</sequence>
<name>RL4_SHEHH</name>
<comment type="function">
    <text evidence="1">One of the primary rRNA binding proteins, this protein initially binds near the 5'-end of the 23S rRNA. It is important during the early stages of 50S assembly. It makes multiple contacts with different domains of the 23S rRNA in the assembled 50S subunit and ribosome.</text>
</comment>
<comment type="function">
    <text evidence="1">Forms part of the polypeptide exit tunnel.</text>
</comment>
<comment type="subunit">
    <text evidence="1">Part of the 50S ribosomal subunit.</text>
</comment>
<comment type="similarity">
    <text evidence="1">Belongs to the universal ribosomal protein uL4 family.</text>
</comment>
<proteinExistence type="inferred from homology"/>
<reference key="1">
    <citation type="submission" date="2008-01" db="EMBL/GenBank/DDBJ databases">
        <title>Complete sequence of Shewanella halifaxensis HAW-EB4.</title>
        <authorList>
            <consortium name="US DOE Joint Genome Institute"/>
            <person name="Copeland A."/>
            <person name="Lucas S."/>
            <person name="Lapidus A."/>
            <person name="Glavina del Rio T."/>
            <person name="Dalin E."/>
            <person name="Tice H."/>
            <person name="Bruce D."/>
            <person name="Goodwin L."/>
            <person name="Pitluck S."/>
            <person name="Sims D."/>
            <person name="Brettin T."/>
            <person name="Detter J.C."/>
            <person name="Han C."/>
            <person name="Kuske C.R."/>
            <person name="Schmutz J."/>
            <person name="Larimer F."/>
            <person name="Land M."/>
            <person name="Hauser L."/>
            <person name="Kyrpides N."/>
            <person name="Kim E."/>
            <person name="Zhao J.-S."/>
            <person name="Richardson P."/>
        </authorList>
    </citation>
    <scope>NUCLEOTIDE SEQUENCE [LARGE SCALE GENOMIC DNA]</scope>
    <source>
        <strain>HAW-EB4</strain>
    </source>
</reference>
<organism>
    <name type="scientific">Shewanella halifaxensis (strain HAW-EB4)</name>
    <dbReference type="NCBI Taxonomy" id="458817"/>
    <lineage>
        <taxon>Bacteria</taxon>
        <taxon>Pseudomonadati</taxon>
        <taxon>Pseudomonadota</taxon>
        <taxon>Gammaproteobacteria</taxon>
        <taxon>Alteromonadales</taxon>
        <taxon>Shewanellaceae</taxon>
        <taxon>Shewanella</taxon>
    </lineage>
</organism>
<gene>
    <name evidence="1" type="primary">rplD</name>
    <name type="ordered locus">Shal_4133</name>
</gene>
<evidence type="ECO:0000255" key="1">
    <source>
        <dbReference type="HAMAP-Rule" id="MF_01328"/>
    </source>
</evidence>
<evidence type="ECO:0000256" key="2">
    <source>
        <dbReference type="SAM" id="MobiDB-lite"/>
    </source>
</evidence>
<evidence type="ECO:0000305" key="3"/>
<protein>
    <recommendedName>
        <fullName evidence="1">Large ribosomal subunit protein uL4</fullName>
    </recommendedName>
    <alternativeName>
        <fullName evidence="3">50S ribosomal protein L4</fullName>
    </alternativeName>
</protein>
<keyword id="KW-0687">Ribonucleoprotein</keyword>
<keyword id="KW-0689">Ribosomal protein</keyword>
<keyword id="KW-0694">RNA-binding</keyword>
<keyword id="KW-0699">rRNA-binding</keyword>
<dbReference type="EMBL" id="CP000931">
    <property type="protein sequence ID" value="ABZ78673.1"/>
    <property type="molecule type" value="Genomic_DNA"/>
</dbReference>
<dbReference type="RefSeq" id="WP_012279180.1">
    <property type="nucleotide sequence ID" value="NC_010334.1"/>
</dbReference>
<dbReference type="SMR" id="B0TM11"/>
<dbReference type="STRING" id="458817.Shal_4133"/>
<dbReference type="KEGG" id="shl:Shal_4133"/>
<dbReference type="eggNOG" id="COG0088">
    <property type="taxonomic scope" value="Bacteria"/>
</dbReference>
<dbReference type="HOGENOM" id="CLU_041575_5_2_6"/>
<dbReference type="OrthoDB" id="9803201at2"/>
<dbReference type="Proteomes" id="UP000001317">
    <property type="component" value="Chromosome"/>
</dbReference>
<dbReference type="GO" id="GO:1990904">
    <property type="term" value="C:ribonucleoprotein complex"/>
    <property type="evidence" value="ECO:0007669"/>
    <property type="project" value="UniProtKB-KW"/>
</dbReference>
<dbReference type="GO" id="GO:0005840">
    <property type="term" value="C:ribosome"/>
    <property type="evidence" value="ECO:0007669"/>
    <property type="project" value="UniProtKB-KW"/>
</dbReference>
<dbReference type="GO" id="GO:0019843">
    <property type="term" value="F:rRNA binding"/>
    <property type="evidence" value="ECO:0007669"/>
    <property type="project" value="UniProtKB-UniRule"/>
</dbReference>
<dbReference type="GO" id="GO:0003735">
    <property type="term" value="F:structural constituent of ribosome"/>
    <property type="evidence" value="ECO:0007669"/>
    <property type="project" value="InterPro"/>
</dbReference>
<dbReference type="GO" id="GO:0006412">
    <property type="term" value="P:translation"/>
    <property type="evidence" value="ECO:0007669"/>
    <property type="project" value="UniProtKB-UniRule"/>
</dbReference>
<dbReference type="FunFam" id="3.40.1370.10:FF:000001">
    <property type="entry name" value="50S ribosomal protein L4"/>
    <property type="match status" value="1"/>
</dbReference>
<dbReference type="Gene3D" id="3.40.1370.10">
    <property type="match status" value="1"/>
</dbReference>
<dbReference type="HAMAP" id="MF_01328_B">
    <property type="entry name" value="Ribosomal_uL4_B"/>
    <property type="match status" value="1"/>
</dbReference>
<dbReference type="InterPro" id="IPR002136">
    <property type="entry name" value="Ribosomal_uL4"/>
</dbReference>
<dbReference type="InterPro" id="IPR013005">
    <property type="entry name" value="Ribosomal_uL4-like"/>
</dbReference>
<dbReference type="InterPro" id="IPR023574">
    <property type="entry name" value="Ribosomal_uL4_dom_sf"/>
</dbReference>
<dbReference type="NCBIfam" id="TIGR03953">
    <property type="entry name" value="rplD_bact"/>
    <property type="match status" value="1"/>
</dbReference>
<dbReference type="PANTHER" id="PTHR10746">
    <property type="entry name" value="50S RIBOSOMAL PROTEIN L4"/>
    <property type="match status" value="1"/>
</dbReference>
<dbReference type="PANTHER" id="PTHR10746:SF6">
    <property type="entry name" value="LARGE RIBOSOMAL SUBUNIT PROTEIN UL4M"/>
    <property type="match status" value="1"/>
</dbReference>
<dbReference type="Pfam" id="PF00573">
    <property type="entry name" value="Ribosomal_L4"/>
    <property type="match status" value="1"/>
</dbReference>
<dbReference type="SUPFAM" id="SSF52166">
    <property type="entry name" value="Ribosomal protein L4"/>
    <property type="match status" value="1"/>
</dbReference>